<evidence type="ECO:0000255" key="1">
    <source>
        <dbReference type="HAMAP-Rule" id="MF_00613"/>
    </source>
</evidence>
<comment type="function">
    <text evidence="1">Stabilizes the interaction between PsaC and the PSI core, assists the docking of the ferredoxin to PSI and interacts with ferredoxin-NADP oxidoreductase.</text>
</comment>
<comment type="subcellular location">
    <subcellularLocation>
        <location evidence="1">Cellular thylakoid membrane</location>
        <topology evidence="1">Peripheral membrane protein</topology>
    </subcellularLocation>
</comment>
<comment type="similarity">
    <text evidence="1">Belongs to the PsaE family.</text>
</comment>
<name>PSAE_PROM2</name>
<accession>A8G2Z0</accession>
<organism>
    <name type="scientific">Prochlorococcus marinus (strain MIT 9215)</name>
    <dbReference type="NCBI Taxonomy" id="93060"/>
    <lineage>
        <taxon>Bacteria</taxon>
        <taxon>Bacillati</taxon>
        <taxon>Cyanobacteriota</taxon>
        <taxon>Cyanophyceae</taxon>
        <taxon>Synechococcales</taxon>
        <taxon>Prochlorococcaceae</taxon>
        <taxon>Prochlorococcus</taxon>
    </lineage>
</organism>
<protein>
    <recommendedName>
        <fullName evidence="1">Photosystem I reaction center subunit IV</fullName>
    </recommendedName>
</protein>
<proteinExistence type="inferred from homology"/>
<sequence length="69" mass="7689">MAIARGDFVRIKRPESYWYNEIGKVASIDKTGIKYNCTVRFDKCNYAGISGTAEGATTNMFAESELEKA</sequence>
<keyword id="KW-0472">Membrane</keyword>
<keyword id="KW-0602">Photosynthesis</keyword>
<keyword id="KW-0603">Photosystem I</keyword>
<keyword id="KW-0793">Thylakoid</keyword>
<dbReference type="EMBL" id="CP000825">
    <property type="protein sequence ID" value="ABV49971.1"/>
    <property type="molecule type" value="Genomic_DNA"/>
</dbReference>
<dbReference type="RefSeq" id="WP_012007121.1">
    <property type="nucleotide sequence ID" value="NC_009840.1"/>
</dbReference>
<dbReference type="SMR" id="A8G2Z0"/>
<dbReference type="STRING" id="93060.P9215_03551"/>
<dbReference type="KEGG" id="pmh:P9215_03551"/>
<dbReference type="eggNOG" id="ENOG503313D">
    <property type="taxonomic scope" value="Bacteria"/>
</dbReference>
<dbReference type="HOGENOM" id="CLU_136462_2_1_3"/>
<dbReference type="OrthoDB" id="427926at2"/>
<dbReference type="Proteomes" id="UP000002014">
    <property type="component" value="Chromosome"/>
</dbReference>
<dbReference type="GO" id="GO:0009538">
    <property type="term" value="C:photosystem I reaction center"/>
    <property type="evidence" value="ECO:0007669"/>
    <property type="project" value="InterPro"/>
</dbReference>
<dbReference type="GO" id="GO:0031676">
    <property type="term" value="C:plasma membrane-derived thylakoid membrane"/>
    <property type="evidence" value="ECO:0007669"/>
    <property type="project" value="UniProtKB-SubCell"/>
</dbReference>
<dbReference type="GO" id="GO:0015979">
    <property type="term" value="P:photosynthesis"/>
    <property type="evidence" value="ECO:0007669"/>
    <property type="project" value="UniProtKB-UniRule"/>
</dbReference>
<dbReference type="Gene3D" id="2.30.30.50">
    <property type="match status" value="1"/>
</dbReference>
<dbReference type="HAMAP" id="MF_00613">
    <property type="entry name" value="PSI_PsaE"/>
    <property type="match status" value="1"/>
</dbReference>
<dbReference type="InterPro" id="IPR008990">
    <property type="entry name" value="Elect_transpt_acc-like_dom_sf"/>
</dbReference>
<dbReference type="InterPro" id="IPR003375">
    <property type="entry name" value="PSI_PsaE"/>
</dbReference>
<dbReference type="NCBIfam" id="NF002745">
    <property type="entry name" value="PRK02749.1"/>
    <property type="match status" value="1"/>
</dbReference>
<dbReference type="PANTHER" id="PTHR34549">
    <property type="entry name" value="PHOTOSYSTEM I REACTION CENTER SUBUNIT IV A, CHLOROPLASTIC-RELATED"/>
    <property type="match status" value="1"/>
</dbReference>
<dbReference type="PANTHER" id="PTHR34549:SF2">
    <property type="entry name" value="PHOTOSYSTEM I SUBUNIT IV"/>
    <property type="match status" value="1"/>
</dbReference>
<dbReference type="Pfam" id="PF02427">
    <property type="entry name" value="PSI_PsaE"/>
    <property type="match status" value="1"/>
</dbReference>
<dbReference type="SUPFAM" id="SSF50090">
    <property type="entry name" value="Electron transport accessory proteins"/>
    <property type="match status" value="1"/>
</dbReference>
<gene>
    <name evidence="1" type="primary">psaE</name>
    <name type="ordered locus">P9215_03551</name>
</gene>
<feature type="chain" id="PRO_1000061305" description="Photosystem I reaction center subunit IV">
    <location>
        <begin position="1"/>
        <end position="69"/>
    </location>
</feature>
<reference key="1">
    <citation type="journal article" date="2007" name="PLoS Genet.">
        <title>Patterns and implications of gene gain and loss in the evolution of Prochlorococcus.</title>
        <authorList>
            <person name="Kettler G.C."/>
            <person name="Martiny A.C."/>
            <person name="Huang K."/>
            <person name="Zucker J."/>
            <person name="Coleman M.L."/>
            <person name="Rodrigue S."/>
            <person name="Chen F."/>
            <person name="Lapidus A."/>
            <person name="Ferriera S."/>
            <person name="Johnson J."/>
            <person name="Steglich C."/>
            <person name="Church G.M."/>
            <person name="Richardson P."/>
            <person name="Chisholm S.W."/>
        </authorList>
    </citation>
    <scope>NUCLEOTIDE SEQUENCE [LARGE SCALE GENOMIC DNA]</scope>
    <source>
        <strain>MIT 9215</strain>
    </source>
</reference>